<keyword id="KW-0963">Cytoplasm</keyword>
<keyword id="KW-0251">Elongation factor</keyword>
<keyword id="KW-0342">GTP-binding</keyword>
<keyword id="KW-0488">Methylation</keyword>
<keyword id="KW-0547">Nucleotide-binding</keyword>
<keyword id="KW-0648">Protein biosynthesis</keyword>
<keyword id="KW-1185">Reference proteome</keyword>
<accession>P0CY35</accession>
<accession>A0A1D8PI42</accession>
<accession>P16017</accession>
<accession>Q5A743</accession>
<reference key="1">
    <citation type="journal article" date="1990" name="J. Bacteriol.">
        <title>Sequence analysis and expression of the two genes for elongation factor 1 alpha from the dimorphic yeast Candida albicans.</title>
        <authorList>
            <person name="Sundstrom P."/>
            <person name="Smith D."/>
            <person name="Sypherd P.S."/>
        </authorList>
    </citation>
    <scope>NUCLEOTIDE SEQUENCE [GENOMIC DNA]</scope>
    <source>
        <strain>SC5314 / ATCC MYA-2876</strain>
    </source>
</reference>
<reference key="2">
    <citation type="journal article" date="2004" name="Proc. Natl. Acad. Sci. U.S.A.">
        <title>The diploid genome sequence of Candida albicans.</title>
        <authorList>
            <person name="Jones T."/>
            <person name="Federspiel N.A."/>
            <person name="Chibana H."/>
            <person name="Dungan J."/>
            <person name="Kalman S."/>
            <person name="Magee B.B."/>
            <person name="Newport G."/>
            <person name="Thorstenson Y.R."/>
            <person name="Agabian N."/>
            <person name="Magee P.T."/>
            <person name="Davis R.W."/>
            <person name="Scherer S."/>
        </authorList>
    </citation>
    <scope>NUCLEOTIDE SEQUENCE [LARGE SCALE GENOMIC DNA]</scope>
    <source>
        <strain>SC5314 / ATCC MYA-2876</strain>
    </source>
</reference>
<reference key="3">
    <citation type="journal article" date="2007" name="Genome Biol.">
        <title>Assembly of the Candida albicans genome into sixteen supercontigs aligned on the eight chromosomes.</title>
        <authorList>
            <person name="van het Hoog M."/>
            <person name="Rast T.J."/>
            <person name="Martchenko M."/>
            <person name="Grindle S."/>
            <person name="Dignard D."/>
            <person name="Hogues H."/>
            <person name="Cuomo C."/>
            <person name="Berriman M."/>
            <person name="Scherer S."/>
            <person name="Magee B.B."/>
            <person name="Whiteway M."/>
            <person name="Chibana H."/>
            <person name="Nantel A."/>
            <person name="Magee P.T."/>
        </authorList>
    </citation>
    <scope>GENOME REANNOTATION</scope>
    <source>
        <strain>SC5314 / ATCC MYA-2876</strain>
    </source>
</reference>
<reference key="4">
    <citation type="journal article" date="2013" name="Genome Biol.">
        <title>Assembly of a phased diploid Candida albicans genome facilitates allele-specific measurements and provides a simple model for repeat and indel structure.</title>
        <authorList>
            <person name="Muzzey D."/>
            <person name="Schwartz K."/>
            <person name="Weissman J.S."/>
            <person name="Sherlock G."/>
        </authorList>
    </citation>
    <scope>NUCLEOTIDE SEQUENCE [LARGE SCALE GENOMIC DNA]</scope>
    <scope>GENOME REANNOTATION</scope>
    <source>
        <strain>SC5314 / ATCC MYA-2876</strain>
    </source>
</reference>
<protein>
    <recommendedName>
        <fullName>Elongation factor 1-alpha 1</fullName>
        <shortName>EF-1-alpha 1</shortName>
    </recommendedName>
</protein>
<organism>
    <name type="scientific">Candida albicans (strain SC5314 / ATCC MYA-2876)</name>
    <name type="common">Yeast</name>
    <dbReference type="NCBI Taxonomy" id="237561"/>
    <lineage>
        <taxon>Eukaryota</taxon>
        <taxon>Fungi</taxon>
        <taxon>Dikarya</taxon>
        <taxon>Ascomycota</taxon>
        <taxon>Saccharomycotina</taxon>
        <taxon>Pichiomycetes</taxon>
        <taxon>Debaryomycetaceae</taxon>
        <taxon>Candida/Lodderomyces clade</taxon>
        <taxon>Candida</taxon>
    </lineage>
</organism>
<gene>
    <name type="primary">TEF1</name>
    <name type="ordered locus">CAALFM_C208370CA</name>
    <name type="ORF">CaO19.12585</name>
    <name type="ORF">CaO19.5119</name>
</gene>
<proteinExistence type="inferred from homology"/>
<name>EF1A1_CANAL</name>
<comment type="function">
    <text>This protein promotes the GTP-dependent binding of aminoacyl-tRNA to the A-site of ribosomes during protein biosynthesis.</text>
</comment>
<comment type="subcellular location">
    <subcellularLocation>
        <location>Cytoplasm</location>
    </subcellularLocation>
</comment>
<comment type="similarity">
    <text evidence="3">Belongs to the TRAFAC class translation factor GTPase superfamily. Classic translation factor GTPase family. EF-Tu/EF-1A subfamily.</text>
</comment>
<sequence length="458" mass="50012">MGKEKTHVNVVVIGHVDSGKSTTTGHLIYKCGGIDKRTIEKFEKEAAELGKGSFKYAWVLDKLKAERERGITIDIALWKFETPKYHVTVIDAPGHRDFIKNMITGTSQADCAILIIAGGTGEFEAGISKDGQTREHALLAYTLGVKQLIVAVNKMDSVKWDKNRFEEIIKETSNFVKKVGYNPKTVPFVPISGWNGDNMIEPSTNCPWYKGWEKETKSGKVTGKTLLEAIDAIEPPTRPTDKPLRLPLQDVYKIGGIGTVPVGRVETGIIKAGMVVTFAPAGVTTEVKSVEMHHEQLAEGVPGDNVGFNVKNVSVKEIRRGNVCGDSKNDPPKGCDSFNAQVIVLNHPGQISAGYSPVLDCHTAHIACKFDTLVEKIDRRTGKKLEENPKFVKSGDAAIVKMVPTKPMCVEAFTDYPPLGRFAVRDMRQTVAVGVIKSVEKSDKAGKVTKAAQKAAKK</sequence>
<dbReference type="EMBL" id="M29934">
    <property type="protein sequence ID" value="AAA34339.1"/>
    <property type="molecule type" value="Genomic_DNA"/>
</dbReference>
<dbReference type="EMBL" id="CP017624">
    <property type="protein sequence ID" value="AOW27827.1"/>
    <property type="molecule type" value="Genomic_DNA"/>
</dbReference>
<dbReference type="PIR" id="A35154">
    <property type="entry name" value="A35154"/>
</dbReference>
<dbReference type="RefSeq" id="XP_710148.2">
    <property type="nucleotide sequence ID" value="XM_705056.2"/>
</dbReference>
<dbReference type="SMR" id="P0CY35"/>
<dbReference type="BioGRID" id="1223851">
    <property type="interactions" value="5"/>
</dbReference>
<dbReference type="FunCoup" id="P0CY35">
    <property type="interactions" value="1912"/>
</dbReference>
<dbReference type="STRING" id="237561.P0CY35"/>
<dbReference type="MoonProt" id="P0CY35"/>
<dbReference type="EnsemblFungi" id="C2_08370C_A-T">
    <property type="protein sequence ID" value="C2_08370C_A-T-p1"/>
    <property type="gene ID" value="C2_08370C_A"/>
</dbReference>
<dbReference type="GeneID" id="3648254"/>
<dbReference type="KEGG" id="cal:CAALFM_C208370CA"/>
<dbReference type="VEuPathDB" id="FungiDB:C2_08370C_A"/>
<dbReference type="eggNOG" id="KOG0052">
    <property type="taxonomic scope" value="Eukaryota"/>
</dbReference>
<dbReference type="HOGENOM" id="CLU_007265_3_5_1"/>
<dbReference type="InParanoid" id="P0CY35"/>
<dbReference type="OMA" id="AIRDMGM"/>
<dbReference type="OrthoDB" id="3969558at2759"/>
<dbReference type="Proteomes" id="UP000000559">
    <property type="component" value="Chromosome 2"/>
</dbReference>
<dbReference type="GO" id="GO:0005737">
    <property type="term" value="C:cytoplasm"/>
    <property type="evidence" value="ECO:0007669"/>
    <property type="project" value="UniProtKB-SubCell"/>
</dbReference>
<dbReference type="GO" id="GO:0005525">
    <property type="term" value="F:GTP binding"/>
    <property type="evidence" value="ECO:0007669"/>
    <property type="project" value="UniProtKB-KW"/>
</dbReference>
<dbReference type="GO" id="GO:0003924">
    <property type="term" value="F:GTPase activity"/>
    <property type="evidence" value="ECO:0000318"/>
    <property type="project" value="GO_Central"/>
</dbReference>
<dbReference type="GO" id="GO:0003746">
    <property type="term" value="F:translation elongation factor activity"/>
    <property type="evidence" value="ECO:0000318"/>
    <property type="project" value="GO_Central"/>
</dbReference>
<dbReference type="GO" id="GO:0006412">
    <property type="term" value="P:translation"/>
    <property type="evidence" value="ECO:0000318"/>
    <property type="project" value="GO_Central"/>
</dbReference>
<dbReference type="GO" id="GO:0006414">
    <property type="term" value="P:translational elongation"/>
    <property type="evidence" value="ECO:0000318"/>
    <property type="project" value="GO_Central"/>
</dbReference>
<dbReference type="CDD" id="cd01883">
    <property type="entry name" value="EF1_alpha"/>
    <property type="match status" value="1"/>
</dbReference>
<dbReference type="CDD" id="cd03693">
    <property type="entry name" value="EF1_alpha_II"/>
    <property type="match status" value="1"/>
</dbReference>
<dbReference type="CDD" id="cd03705">
    <property type="entry name" value="EF1_alpha_III"/>
    <property type="match status" value="1"/>
</dbReference>
<dbReference type="FunFam" id="2.40.30.10:FF:000003">
    <property type="entry name" value="Elongation factor 1-alpha"/>
    <property type="match status" value="1"/>
</dbReference>
<dbReference type="FunFam" id="2.40.30.10:FF:000005">
    <property type="entry name" value="Elongation factor 1-alpha"/>
    <property type="match status" value="1"/>
</dbReference>
<dbReference type="FunFam" id="3.40.50.300:FF:000211">
    <property type="entry name" value="Elongation factor 1-alpha"/>
    <property type="match status" value="1"/>
</dbReference>
<dbReference type="Gene3D" id="3.40.50.300">
    <property type="entry name" value="P-loop containing nucleotide triphosphate hydrolases"/>
    <property type="match status" value="1"/>
</dbReference>
<dbReference type="Gene3D" id="2.40.30.10">
    <property type="entry name" value="Translation factors"/>
    <property type="match status" value="2"/>
</dbReference>
<dbReference type="HAMAP" id="MF_00118_A">
    <property type="entry name" value="EF_Tu_A"/>
    <property type="match status" value="1"/>
</dbReference>
<dbReference type="InterPro" id="IPR004161">
    <property type="entry name" value="EFTu-like_2"/>
</dbReference>
<dbReference type="InterPro" id="IPR031157">
    <property type="entry name" value="G_TR_CS"/>
</dbReference>
<dbReference type="InterPro" id="IPR054696">
    <property type="entry name" value="GTP-eEF1A_C"/>
</dbReference>
<dbReference type="InterPro" id="IPR027417">
    <property type="entry name" value="P-loop_NTPase"/>
</dbReference>
<dbReference type="InterPro" id="IPR000795">
    <property type="entry name" value="T_Tr_GTP-bd_dom"/>
</dbReference>
<dbReference type="InterPro" id="IPR050100">
    <property type="entry name" value="TRAFAC_GTPase_members"/>
</dbReference>
<dbReference type="InterPro" id="IPR009000">
    <property type="entry name" value="Transl_B-barrel_sf"/>
</dbReference>
<dbReference type="InterPro" id="IPR009001">
    <property type="entry name" value="Transl_elong_EF1A/Init_IF2_C"/>
</dbReference>
<dbReference type="InterPro" id="IPR004539">
    <property type="entry name" value="Transl_elong_EF1A_euk/arc"/>
</dbReference>
<dbReference type="NCBIfam" id="TIGR00483">
    <property type="entry name" value="EF-1_alpha"/>
    <property type="match status" value="1"/>
</dbReference>
<dbReference type="NCBIfam" id="NF008969">
    <property type="entry name" value="PRK12317.1"/>
    <property type="match status" value="1"/>
</dbReference>
<dbReference type="PANTHER" id="PTHR23115">
    <property type="entry name" value="TRANSLATION FACTOR"/>
    <property type="match status" value="1"/>
</dbReference>
<dbReference type="Pfam" id="PF22594">
    <property type="entry name" value="GTP-eEF1A_C"/>
    <property type="match status" value="1"/>
</dbReference>
<dbReference type="Pfam" id="PF00009">
    <property type="entry name" value="GTP_EFTU"/>
    <property type="match status" value="1"/>
</dbReference>
<dbReference type="Pfam" id="PF03144">
    <property type="entry name" value="GTP_EFTU_D2"/>
    <property type="match status" value="1"/>
</dbReference>
<dbReference type="PRINTS" id="PR00315">
    <property type="entry name" value="ELONGATNFCT"/>
</dbReference>
<dbReference type="SUPFAM" id="SSF50465">
    <property type="entry name" value="EF-Tu/eEF-1alpha/eIF2-gamma C-terminal domain"/>
    <property type="match status" value="1"/>
</dbReference>
<dbReference type="SUPFAM" id="SSF52540">
    <property type="entry name" value="P-loop containing nucleoside triphosphate hydrolases"/>
    <property type="match status" value="1"/>
</dbReference>
<dbReference type="SUPFAM" id="SSF50447">
    <property type="entry name" value="Translation proteins"/>
    <property type="match status" value="1"/>
</dbReference>
<dbReference type="PROSITE" id="PS00301">
    <property type="entry name" value="G_TR_1"/>
    <property type="match status" value="1"/>
</dbReference>
<dbReference type="PROSITE" id="PS51722">
    <property type="entry name" value="G_TR_2"/>
    <property type="match status" value="1"/>
</dbReference>
<feature type="initiator methionine" description="Removed" evidence="2">
    <location>
        <position position="1"/>
    </location>
</feature>
<feature type="chain" id="PRO_0000090956" description="Elongation factor 1-alpha 1">
    <location>
        <begin position="2"/>
        <end position="458"/>
    </location>
</feature>
<feature type="domain" description="tr-type G">
    <location>
        <begin position="5"/>
        <end position="240"/>
    </location>
</feature>
<feature type="region of interest" description="G1" evidence="1">
    <location>
        <begin position="14"/>
        <end position="21"/>
    </location>
</feature>
<feature type="region of interest" description="G2" evidence="1">
    <location>
        <begin position="70"/>
        <end position="74"/>
    </location>
</feature>
<feature type="region of interest" description="G3" evidence="1">
    <location>
        <begin position="91"/>
        <end position="94"/>
    </location>
</feature>
<feature type="region of interest" description="G4" evidence="1">
    <location>
        <begin position="153"/>
        <end position="156"/>
    </location>
</feature>
<feature type="region of interest" description="G5" evidence="1">
    <location>
        <begin position="192"/>
        <end position="194"/>
    </location>
</feature>
<feature type="binding site" evidence="1">
    <location>
        <begin position="14"/>
        <end position="21"/>
    </location>
    <ligand>
        <name>GTP</name>
        <dbReference type="ChEBI" id="CHEBI:37565"/>
    </ligand>
</feature>
<feature type="binding site" evidence="1">
    <location>
        <begin position="91"/>
        <end position="95"/>
    </location>
    <ligand>
        <name>GTP</name>
        <dbReference type="ChEBI" id="CHEBI:37565"/>
    </ligand>
</feature>
<feature type="binding site" evidence="1">
    <location>
        <begin position="153"/>
        <end position="156"/>
    </location>
    <ligand>
        <name>GTP</name>
        <dbReference type="ChEBI" id="CHEBI:37565"/>
    </ligand>
</feature>
<feature type="modified residue" description="N,N,N-trimethylglycine" evidence="2">
    <location>
        <position position="2"/>
    </location>
</feature>
<feature type="modified residue" description="N6,N6-dimethyllysine; alternate" evidence="2">
    <location>
        <position position="3"/>
    </location>
</feature>
<feature type="modified residue" description="N6-methyllysine; alternate" evidence="2">
    <location>
        <position position="3"/>
    </location>
</feature>
<feature type="modified residue" description="N6-methyllysine" evidence="2">
    <location>
        <position position="30"/>
    </location>
</feature>
<feature type="modified residue" description="N6,N6,N6-trimethyllysine" evidence="2">
    <location>
        <position position="79"/>
    </location>
</feature>
<feature type="modified residue" description="N6,N6-dimethyllysine; alternate" evidence="2">
    <location>
        <position position="316"/>
    </location>
</feature>
<feature type="modified residue" description="N6-methyllysine; alternate" evidence="2">
    <location>
        <position position="316"/>
    </location>
</feature>
<feature type="modified residue" description="N6-methyllysine" evidence="2">
    <location>
        <position position="390"/>
    </location>
</feature>
<evidence type="ECO:0000250" key="1"/>
<evidence type="ECO:0000250" key="2">
    <source>
        <dbReference type="UniProtKB" id="P02994"/>
    </source>
</evidence>
<evidence type="ECO:0000305" key="3"/>